<organism>
    <name type="scientific">Xylella fastidiosa (strain M12)</name>
    <dbReference type="NCBI Taxonomy" id="405440"/>
    <lineage>
        <taxon>Bacteria</taxon>
        <taxon>Pseudomonadati</taxon>
        <taxon>Pseudomonadota</taxon>
        <taxon>Gammaproteobacteria</taxon>
        <taxon>Lysobacterales</taxon>
        <taxon>Lysobacteraceae</taxon>
        <taxon>Xylella</taxon>
    </lineage>
</organism>
<protein>
    <recommendedName>
        <fullName evidence="1">1-deoxy-D-xylulose-5-phosphate synthase</fullName>
        <ecNumber evidence="1">2.2.1.7</ecNumber>
    </recommendedName>
    <alternativeName>
        <fullName evidence="1">1-deoxyxylulose-5-phosphate synthase</fullName>
        <shortName evidence="1">DXP synthase</shortName>
        <shortName evidence="1">DXPS</shortName>
    </alternativeName>
</protein>
<reference key="1">
    <citation type="journal article" date="2010" name="J. Bacteriol.">
        <title>Whole genome sequences of two Xylella fastidiosa strains (M12 and M23) causing almond leaf scorch disease in California.</title>
        <authorList>
            <person name="Chen J."/>
            <person name="Xie G."/>
            <person name="Han S."/>
            <person name="Chertkov O."/>
            <person name="Sims D."/>
            <person name="Civerolo E.L."/>
        </authorList>
    </citation>
    <scope>NUCLEOTIDE SEQUENCE [LARGE SCALE GENOMIC DNA]</scope>
    <source>
        <strain>M12</strain>
    </source>
</reference>
<accession>B0U3E1</accession>
<comment type="function">
    <text evidence="1">Catalyzes the acyloin condensation reaction between C atoms 2 and 3 of pyruvate and glyceraldehyde 3-phosphate to yield 1-deoxy-D-xylulose-5-phosphate (DXP).</text>
</comment>
<comment type="catalytic activity">
    <reaction evidence="1">
        <text>D-glyceraldehyde 3-phosphate + pyruvate + H(+) = 1-deoxy-D-xylulose 5-phosphate + CO2</text>
        <dbReference type="Rhea" id="RHEA:12605"/>
        <dbReference type="ChEBI" id="CHEBI:15361"/>
        <dbReference type="ChEBI" id="CHEBI:15378"/>
        <dbReference type="ChEBI" id="CHEBI:16526"/>
        <dbReference type="ChEBI" id="CHEBI:57792"/>
        <dbReference type="ChEBI" id="CHEBI:59776"/>
        <dbReference type="EC" id="2.2.1.7"/>
    </reaction>
</comment>
<comment type="cofactor">
    <cofactor evidence="1">
        <name>Mg(2+)</name>
        <dbReference type="ChEBI" id="CHEBI:18420"/>
    </cofactor>
    <text evidence="1">Binds 1 Mg(2+) ion per subunit.</text>
</comment>
<comment type="cofactor">
    <cofactor evidence="1">
        <name>thiamine diphosphate</name>
        <dbReference type="ChEBI" id="CHEBI:58937"/>
    </cofactor>
    <text evidence="1">Binds 1 thiamine pyrophosphate per subunit.</text>
</comment>
<comment type="pathway">
    <text evidence="1">Metabolic intermediate biosynthesis; 1-deoxy-D-xylulose 5-phosphate biosynthesis; 1-deoxy-D-xylulose 5-phosphate from D-glyceraldehyde 3-phosphate and pyruvate: step 1/1.</text>
</comment>
<comment type="subunit">
    <text evidence="1">Homodimer.</text>
</comment>
<comment type="similarity">
    <text evidence="1">Belongs to the transketolase family. DXPS subfamily.</text>
</comment>
<keyword id="KW-0414">Isoprene biosynthesis</keyword>
<keyword id="KW-0460">Magnesium</keyword>
<keyword id="KW-0479">Metal-binding</keyword>
<keyword id="KW-0784">Thiamine biosynthesis</keyword>
<keyword id="KW-0786">Thiamine pyrophosphate</keyword>
<keyword id="KW-0808">Transferase</keyword>
<sequence length="635" mass="68377">MIDSTCYPRLSRIQTPEDLRAFQESELRAVADELRNYLIESVGLSGGHFAAGLGVVELTIALHYLYCTPIDQLVWDVGHQTYPHKILTGRRDKISTVKHQGGLAPFPKREESIYDTFGVGHSSTSISAALGMAIVAQRNGDERKVVAIIGDGAMTAGMAYEALNHAGGMSPAPNLLVILNDNRMSISEAVGGLTKMLGRATGSKALNAIREGGKRIFGDKKTNATARFLRRWEEHWKGMFVPSTLFEEMGFHYTGPIDGHDLPALLGALKTLRTLKGPQLLHVITTKGKGYELAEGDQIGYHAVAPFDPQKGLIKAGAKKQTYTDVFSEWLCDMAAVEPRLLAITPAMREGSGLVRFSQEYPQRYFDVAIAEQHAITLAAGMATQGAKPVVAIYSTFLQRGYDQLVHDVALQKLDVLFAVDRGGVVGPDGATHAGNLDLSFLRCVPNMMLMAPADEAECRKMLSTGFHYSGPVAVRYPRGTGPGVVPSAELDVLPVGVAQLRHSGTRIALLGFGVCVAPAEQVGRRLGLTVVNMRFIKPLDRTLLLELARTHEVFVTIEDNVVAGGAGSGVAELLNAEGIVLPIVHLGLPDAFQQHASREDLLAEAGIDAAGVYAALLSRWPDLAVQNHPLSAVS</sequence>
<evidence type="ECO:0000255" key="1">
    <source>
        <dbReference type="HAMAP-Rule" id="MF_00315"/>
    </source>
</evidence>
<proteinExistence type="inferred from homology"/>
<dbReference type="EC" id="2.2.1.7" evidence="1"/>
<dbReference type="EMBL" id="CP000941">
    <property type="protein sequence ID" value="ACA12370.1"/>
    <property type="molecule type" value="Genomic_DNA"/>
</dbReference>
<dbReference type="RefSeq" id="WP_004083434.1">
    <property type="nucleotide sequence ID" value="NC_010513.1"/>
</dbReference>
<dbReference type="SMR" id="B0U3E1"/>
<dbReference type="KEGG" id="xfm:Xfasm12_1447"/>
<dbReference type="HOGENOM" id="CLU_009227_1_4_6"/>
<dbReference type="UniPathway" id="UPA00064">
    <property type="reaction ID" value="UER00091"/>
</dbReference>
<dbReference type="GO" id="GO:0005829">
    <property type="term" value="C:cytosol"/>
    <property type="evidence" value="ECO:0007669"/>
    <property type="project" value="TreeGrafter"/>
</dbReference>
<dbReference type="GO" id="GO:0008661">
    <property type="term" value="F:1-deoxy-D-xylulose-5-phosphate synthase activity"/>
    <property type="evidence" value="ECO:0007669"/>
    <property type="project" value="UniProtKB-UniRule"/>
</dbReference>
<dbReference type="GO" id="GO:0000287">
    <property type="term" value="F:magnesium ion binding"/>
    <property type="evidence" value="ECO:0007669"/>
    <property type="project" value="UniProtKB-UniRule"/>
</dbReference>
<dbReference type="GO" id="GO:0030976">
    <property type="term" value="F:thiamine pyrophosphate binding"/>
    <property type="evidence" value="ECO:0007669"/>
    <property type="project" value="UniProtKB-UniRule"/>
</dbReference>
<dbReference type="GO" id="GO:0052865">
    <property type="term" value="P:1-deoxy-D-xylulose 5-phosphate biosynthetic process"/>
    <property type="evidence" value="ECO:0007669"/>
    <property type="project" value="UniProtKB-UniPathway"/>
</dbReference>
<dbReference type="GO" id="GO:0019288">
    <property type="term" value="P:isopentenyl diphosphate biosynthetic process, methylerythritol 4-phosphate pathway"/>
    <property type="evidence" value="ECO:0007669"/>
    <property type="project" value="TreeGrafter"/>
</dbReference>
<dbReference type="GO" id="GO:0016114">
    <property type="term" value="P:terpenoid biosynthetic process"/>
    <property type="evidence" value="ECO:0007669"/>
    <property type="project" value="UniProtKB-UniRule"/>
</dbReference>
<dbReference type="GO" id="GO:0009228">
    <property type="term" value="P:thiamine biosynthetic process"/>
    <property type="evidence" value="ECO:0007669"/>
    <property type="project" value="UniProtKB-UniRule"/>
</dbReference>
<dbReference type="CDD" id="cd02007">
    <property type="entry name" value="TPP_DXS"/>
    <property type="match status" value="1"/>
</dbReference>
<dbReference type="CDD" id="cd07033">
    <property type="entry name" value="TPP_PYR_DXS_TK_like"/>
    <property type="match status" value="1"/>
</dbReference>
<dbReference type="FunFam" id="3.40.50.920:FF:000002">
    <property type="entry name" value="1-deoxy-D-xylulose-5-phosphate synthase"/>
    <property type="match status" value="1"/>
</dbReference>
<dbReference type="FunFam" id="3.40.50.970:FF:000005">
    <property type="entry name" value="1-deoxy-D-xylulose-5-phosphate synthase"/>
    <property type="match status" value="1"/>
</dbReference>
<dbReference type="Gene3D" id="3.40.50.920">
    <property type="match status" value="1"/>
</dbReference>
<dbReference type="Gene3D" id="3.40.50.970">
    <property type="match status" value="2"/>
</dbReference>
<dbReference type="HAMAP" id="MF_00315">
    <property type="entry name" value="DXP_synth"/>
    <property type="match status" value="1"/>
</dbReference>
<dbReference type="InterPro" id="IPR005477">
    <property type="entry name" value="Dxylulose-5-P_synthase"/>
</dbReference>
<dbReference type="InterPro" id="IPR029061">
    <property type="entry name" value="THDP-binding"/>
</dbReference>
<dbReference type="InterPro" id="IPR009014">
    <property type="entry name" value="Transketo_C/PFOR_II"/>
</dbReference>
<dbReference type="InterPro" id="IPR005475">
    <property type="entry name" value="Transketolase-like_Pyr-bd"/>
</dbReference>
<dbReference type="InterPro" id="IPR020826">
    <property type="entry name" value="Transketolase_BS"/>
</dbReference>
<dbReference type="InterPro" id="IPR033248">
    <property type="entry name" value="Transketolase_C"/>
</dbReference>
<dbReference type="InterPro" id="IPR049557">
    <property type="entry name" value="Transketolase_CS"/>
</dbReference>
<dbReference type="NCBIfam" id="TIGR00204">
    <property type="entry name" value="dxs"/>
    <property type="match status" value="1"/>
</dbReference>
<dbReference type="NCBIfam" id="NF003933">
    <property type="entry name" value="PRK05444.2-2"/>
    <property type="match status" value="1"/>
</dbReference>
<dbReference type="PANTHER" id="PTHR43322">
    <property type="entry name" value="1-D-DEOXYXYLULOSE 5-PHOSPHATE SYNTHASE-RELATED"/>
    <property type="match status" value="1"/>
</dbReference>
<dbReference type="PANTHER" id="PTHR43322:SF5">
    <property type="entry name" value="1-DEOXY-D-XYLULOSE-5-PHOSPHATE SYNTHASE, CHLOROPLASTIC"/>
    <property type="match status" value="1"/>
</dbReference>
<dbReference type="Pfam" id="PF13292">
    <property type="entry name" value="DXP_synthase_N"/>
    <property type="match status" value="1"/>
</dbReference>
<dbReference type="Pfam" id="PF02779">
    <property type="entry name" value="Transket_pyr"/>
    <property type="match status" value="1"/>
</dbReference>
<dbReference type="Pfam" id="PF02780">
    <property type="entry name" value="Transketolase_C"/>
    <property type="match status" value="1"/>
</dbReference>
<dbReference type="SMART" id="SM00861">
    <property type="entry name" value="Transket_pyr"/>
    <property type="match status" value="1"/>
</dbReference>
<dbReference type="SUPFAM" id="SSF52518">
    <property type="entry name" value="Thiamin diphosphate-binding fold (THDP-binding)"/>
    <property type="match status" value="2"/>
</dbReference>
<dbReference type="SUPFAM" id="SSF52922">
    <property type="entry name" value="TK C-terminal domain-like"/>
    <property type="match status" value="1"/>
</dbReference>
<dbReference type="PROSITE" id="PS00801">
    <property type="entry name" value="TRANSKETOLASE_1"/>
    <property type="match status" value="1"/>
</dbReference>
<dbReference type="PROSITE" id="PS00802">
    <property type="entry name" value="TRANSKETOLASE_2"/>
    <property type="match status" value="1"/>
</dbReference>
<gene>
    <name evidence="1" type="primary">dxs</name>
    <name type="ordered locus">Xfasm12_1447</name>
</gene>
<feature type="chain" id="PRO_1000115783" description="1-deoxy-D-xylulose-5-phosphate synthase">
    <location>
        <begin position="1"/>
        <end position="635"/>
    </location>
</feature>
<feature type="binding site" evidence="1">
    <location>
        <position position="79"/>
    </location>
    <ligand>
        <name>thiamine diphosphate</name>
        <dbReference type="ChEBI" id="CHEBI:58937"/>
    </ligand>
</feature>
<feature type="binding site" evidence="1">
    <location>
        <begin position="120"/>
        <end position="122"/>
    </location>
    <ligand>
        <name>thiamine diphosphate</name>
        <dbReference type="ChEBI" id="CHEBI:58937"/>
    </ligand>
</feature>
<feature type="binding site" evidence="1">
    <location>
        <position position="151"/>
    </location>
    <ligand>
        <name>Mg(2+)</name>
        <dbReference type="ChEBI" id="CHEBI:18420"/>
    </ligand>
</feature>
<feature type="binding site" evidence="1">
    <location>
        <begin position="152"/>
        <end position="153"/>
    </location>
    <ligand>
        <name>thiamine diphosphate</name>
        <dbReference type="ChEBI" id="CHEBI:58937"/>
    </ligand>
</feature>
<feature type="binding site" evidence="1">
    <location>
        <position position="182"/>
    </location>
    <ligand>
        <name>Mg(2+)</name>
        <dbReference type="ChEBI" id="CHEBI:18420"/>
    </ligand>
</feature>
<feature type="binding site" evidence="1">
    <location>
        <position position="182"/>
    </location>
    <ligand>
        <name>thiamine diphosphate</name>
        <dbReference type="ChEBI" id="CHEBI:58937"/>
    </ligand>
</feature>
<feature type="binding site" evidence="1">
    <location>
        <position position="291"/>
    </location>
    <ligand>
        <name>thiamine diphosphate</name>
        <dbReference type="ChEBI" id="CHEBI:58937"/>
    </ligand>
</feature>
<feature type="binding site" evidence="1">
    <location>
        <position position="372"/>
    </location>
    <ligand>
        <name>thiamine diphosphate</name>
        <dbReference type="ChEBI" id="CHEBI:58937"/>
    </ligand>
</feature>
<name>DXS_XYLFM</name>